<comment type="function">
    <text evidence="1">This protein binds specifically to 23S rRNA.</text>
</comment>
<comment type="function">
    <text evidence="1">The globular domain of the protein is located near the polypeptide exit tunnel on the outside of the subunit, while an extended beta-hairpin is found that lines the wall of the exit tunnel in the center of the 70S ribosome.</text>
</comment>
<comment type="subunit">
    <text evidence="1">Part of the 50S ribosomal subunit.</text>
</comment>
<comment type="subcellular location">
    <subcellularLocation>
        <location>Plastid</location>
        <location>Chloroplast</location>
    </subcellularLocation>
</comment>
<comment type="similarity">
    <text evidence="2">Belongs to the universal ribosomal protein uL22 family.</text>
</comment>
<accession>A6H5M1</accession>
<organism>
    <name type="scientific">Cycas taitungensis</name>
    <name type="common">Prince sago</name>
    <name type="synonym">Cycas taiwaniana</name>
    <dbReference type="NCBI Taxonomy" id="54799"/>
    <lineage>
        <taxon>Eukaryota</taxon>
        <taxon>Viridiplantae</taxon>
        <taxon>Streptophyta</taxon>
        <taxon>Embryophyta</taxon>
        <taxon>Tracheophyta</taxon>
        <taxon>Spermatophyta</taxon>
        <taxon>Cycadidae</taxon>
        <taxon>Cycadales</taxon>
        <taxon>Cycadaceae</taxon>
        <taxon>Cycas</taxon>
    </lineage>
</organism>
<sequence length="139" mass="15922">MEKNSSSPKIRALAKHIRMSTHRARRVIDQVRNRSYEQALMILELMPYRACYPILQLISSAAANANHNIGLNKANLFVSRAEVNEGAILKRSQPRAQGRGYPIQKPTCHITIVLEERSRSNNLIMPTEPKKGKYVWDRK</sequence>
<protein>
    <recommendedName>
        <fullName evidence="2">Large ribosomal subunit protein uL22c</fullName>
    </recommendedName>
    <alternativeName>
        <fullName>50S ribosomal protein L22, chloroplastic</fullName>
    </alternativeName>
</protein>
<evidence type="ECO:0000250" key="1"/>
<evidence type="ECO:0000305" key="2"/>
<proteinExistence type="inferred from homology"/>
<keyword id="KW-0150">Chloroplast</keyword>
<keyword id="KW-0934">Plastid</keyword>
<keyword id="KW-0687">Ribonucleoprotein</keyword>
<keyword id="KW-0689">Ribosomal protein</keyword>
<keyword id="KW-0694">RNA-binding</keyword>
<keyword id="KW-0699">rRNA-binding</keyword>
<name>RK22_CYCTA</name>
<geneLocation type="chloroplast"/>
<dbReference type="EMBL" id="AP009339">
    <property type="protein sequence ID" value="BAF64987.1"/>
    <property type="molecule type" value="Genomic_DNA"/>
</dbReference>
<dbReference type="RefSeq" id="YP_001312246.1">
    <property type="nucleotide sequence ID" value="NC_009618.1"/>
</dbReference>
<dbReference type="SMR" id="A6H5M1"/>
<dbReference type="GeneID" id="5309490"/>
<dbReference type="GO" id="GO:0009507">
    <property type="term" value="C:chloroplast"/>
    <property type="evidence" value="ECO:0007669"/>
    <property type="project" value="UniProtKB-SubCell"/>
</dbReference>
<dbReference type="GO" id="GO:0015934">
    <property type="term" value="C:large ribosomal subunit"/>
    <property type="evidence" value="ECO:0007669"/>
    <property type="project" value="InterPro"/>
</dbReference>
<dbReference type="GO" id="GO:0019843">
    <property type="term" value="F:rRNA binding"/>
    <property type="evidence" value="ECO:0007669"/>
    <property type="project" value="UniProtKB-UniRule"/>
</dbReference>
<dbReference type="GO" id="GO:0003735">
    <property type="term" value="F:structural constituent of ribosome"/>
    <property type="evidence" value="ECO:0007669"/>
    <property type="project" value="InterPro"/>
</dbReference>
<dbReference type="GO" id="GO:0006412">
    <property type="term" value="P:translation"/>
    <property type="evidence" value="ECO:0007669"/>
    <property type="project" value="UniProtKB-UniRule"/>
</dbReference>
<dbReference type="CDD" id="cd00336">
    <property type="entry name" value="Ribosomal_L22"/>
    <property type="match status" value="1"/>
</dbReference>
<dbReference type="Gene3D" id="3.90.470.10">
    <property type="entry name" value="Ribosomal protein L22/L17"/>
    <property type="match status" value="1"/>
</dbReference>
<dbReference type="HAMAP" id="MF_01331_B">
    <property type="entry name" value="Ribosomal_uL22_B"/>
    <property type="match status" value="1"/>
</dbReference>
<dbReference type="InterPro" id="IPR001063">
    <property type="entry name" value="Ribosomal_uL22"/>
</dbReference>
<dbReference type="InterPro" id="IPR005727">
    <property type="entry name" value="Ribosomal_uL22_bac/chlpt-type"/>
</dbReference>
<dbReference type="InterPro" id="IPR047867">
    <property type="entry name" value="Ribosomal_uL22_bac/org-type"/>
</dbReference>
<dbReference type="InterPro" id="IPR018260">
    <property type="entry name" value="Ribosomal_uL22_CS"/>
</dbReference>
<dbReference type="InterPro" id="IPR036394">
    <property type="entry name" value="Ribosomal_uL22_sf"/>
</dbReference>
<dbReference type="NCBIfam" id="TIGR01044">
    <property type="entry name" value="rplV_bact"/>
    <property type="match status" value="1"/>
</dbReference>
<dbReference type="PANTHER" id="PTHR13501">
    <property type="entry name" value="CHLOROPLAST 50S RIBOSOMAL PROTEIN L22-RELATED"/>
    <property type="match status" value="1"/>
</dbReference>
<dbReference type="PANTHER" id="PTHR13501:SF10">
    <property type="entry name" value="LARGE RIBOSOMAL SUBUNIT PROTEIN UL22M"/>
    <property type="match status" value="1"/>
</dbReference>
<dbReference type="Pfam" id="PF00237">
    <property type="entry name" value="Ribosomal_L22"/>
    <property type="match status" value="1"/>
</dbReference>
<dbReference type="SUPFAM" id="SSF54843">
    <property type="entry name" value="Ribosomal protein L22"/>
    <property type="match status" value="1"/>
</dbReference>
<dbReference type="PROSITE" id="PS00464">
    <property type="entry name" value="RIBOSOMAL_L22"/>
    <property type="match status" value="1"/>
</dbReference>
<feature type="chain" id="PRO_0000354571" description="Large ribosomal subunit protein uL22c">
    <location>
        <begin position="1"/>
        <end position="139"/>
    </location>
</feature>
<reference key="1">
    <citation type="journal article" date="2007" name="Mol. Biol. Evol.">
        <title>Chloroplast genome (cpDNA) of Cycas taitungensis and 56 cp protein-coding genes of Gnetum parvifolium: insights into cpDNA evolution and phylogeny of extant seed plants.</title>
        <authorList>
            <person name="Wu C.-S."/>
            <person name="Wang Y.-N."/>
            <person name="Liu S.-M."/>
            <person name="Chaw S.-M."/>
        </authorList>
    </citation>
    <scope>NUCLEOTIDE SEQUENCE [LARGE SCALE GENOMIC DNA]</scope>
</reference>
<gene>
    <name type="primary">rpl22</name>
</gene>